<sequence>MSAESFNIVHIRENKLLARRELLVEAVHQNASTPTRQSVREWVAKQLGIDISNVFVRRIKTEFGRGRSLAEVHVYNDSKIARVIEPLYILARNLGEEGKKLLEEAKKRRNERREKKKRKKK</sequence>
<accession>Q8ZV65</accession>
<name>RS24_PYRAE</name>
<protein>
    <recommendedName>
        <fullName evidence="1">Small ribosomal subunit protein eS24</fullName>
    </recommendedName>
    <alternativeName>
        <fullName evidence="2">30S ribosomal protein S24e</fullName>
    </alternativeName>
</protein>
<evidence type="ECO:0000255" key="1">
    <source>
        <dbReference type="HAMAP-Rule" id="MF_00545"/>
    </source>
</evidence>
<evidence type="ECO:0000305" key="2"/>
<feature type="chain" id="PRO_0000137651" description="Small ribosomal subunit protein eS24">
    <location>
        <begin position="1"/>
        <end position="121"/>
    </location>
</feature>
<reference key="1">
    <citation type="journal article" date="2002" name="Proc. Natl. Acad. Sci. U.S.A.">
        <title>Genome sequence of the hyperthermophilic crenarchaeon Pyrobaculum aerophilum.</title>
        <authorList>
            <person name="Fitz-Gibbon S.T."/>
            <person name="Ladner H."/>
            <person name="Kim U.-J."/>
            <person name="Stetter K.O."/>
            <person name="Simon M.I."/>
            <person name="Miller J.H."/>
        </authorList>
    </citation>
    <scope>NUCLEOTIDE SEQUENCE [LARGE SCALE GENOMIC DNA]</scope>
    <source>
        <strain>ATCC 51768 / DSM 7523 / JCM 9630 / CIP 104966 / NBRC 100827 / IM2</strain>
    </source>
</reference>
<gene>
    <name evidence="1" type="primary">rps24e</name>
    <name type="ordered locus">PAE2434</name>
</gene>
<organism>
    <name type="scientific">Pyrobaculum aerophilum (strain ATCC 51768 / DSM 7523 / JCM 9630 / CIP 104966 / NBRC 100827 / IM2)</name>
    <dbReference type="NCBI Taxonomy" id="178306"/>
    <lineage>
        <taxon>Archaea</taxon>
        <taxon>Thermoproteota</taxon>
        <taxon>Thermoprotei</taxon>
        <taxon>Thermoproteales</taxon>
        <taxon>Thermoproteaceae</taxon>
        <taxon>Pyrobaculum</taxon>
    </lineage>
</organism>
<proteinExistence type="inferred from homology"/>
<keyword id="KW-1185">Reference proteome</keyword>
<keyword id="KW-0687">Ribonucleoprotein</keyword>
<keyword id="KW-0689">Ribosomal protein</keyword>
<comment type="similarity">
    <text evidence="1">Belongs to the eukaryotic ribosomal protein eS24 family.</text>
</comment>
<dbReference type="EMBL" id="AE009441">
    <property type="protein sequence ID" value="AAL64191.1"/>
    <property type="molecule type" value="Genomic_DNA"/>
</dbReference>
<dbReference type="RefSeq" id="WP_011008659.1">
    <property type="nucleotide sequence ID" value="NC_003364.1"/>
</dbReference>
<dbReference type="SMR" id="Q8ZV65"/>
<dbReference type="FunCoup" id="Q8ZV65">
    <property type="interactions" value="59"/>
</dbReference>
<dbReference type="STRING" id="178306.PAE2434"/>
<dbReference type="EnsemblBacteria" id="AAL64191">
    <property type="protein sequence ID" value="AAL64191"/>
    <property type="gene ID" value="PAE2434"/>
</dbReference>
<dbReference type="GeneID" id="1464532"/>
<dbReference type="KEGG" id="pai:PAE2434"/>
<dbReference type="PATRIC" id="fig|178306.9.peg.1815"/>
<dbReference type="eggNOG" id="arCOG04182">
    <property type="taxonomic scope" value="Archaea"/>
</dbReference>
<dbReference type="HOGENOM" id="CLU_107248_3_0_2"/>
<dbReference type="InParanoid" id="Q8ZV65"/>
<dbReference type="Proteomes" id="UP000002439">
    <property type="component" value="Chromosome"/>
</dbReference>
<dbReference type="GO" id="GO:1990904">
    <property type="term" value="C:ribonucleoprotein complex"/>
    <property type="evidence" value="ECO:0007669"/>
    <property type="project" value="UniProtKB-KW"/>
</dbReference>
<dbReference type="GO" id="GO:0005840">
    <property type="term" value="C:ribosome"/>
    <property type="evidence" value="ECO:0007669"/>
    <property type="project" value="UniProtKB-KW"/>
</dbReference>
<dbReference type="GO" id="GO:0003735">
    <property type="term" value="F:structural constituent of ribosome"/>
    <property type="evidence" value="ECO:0007669"/>
    <property type="project" value="InterPro"/>
</dbReference>
<dbReference type="GO" id="GO:0006412">
    <property type="term" value="P:translation"/>
    <property type="evidence" value="ECO:0007669"/>
    <property type="project" value="UniProtKB-UniRule"/>
</dbReference>
<dbReference type="Gene3D" id="3.30.70.3370">
    <property type="match status" value="1"/>
</dbReference>
<dbReference type="HAMAP" id="MF_00545">
    <property type="entry name" value="Ribosomal_eS24"/>
    <property type="match status" value="1"/>
</dbReference>
<dbReference type="InterPro" id="IPR053709">
    <property type="entry name" value="eRP_eS24_sf"/>
</dbReference>
<dbReference type="InterPro" id="IPR001976">
    <property type="entry name" value="Ribosomal_eS24"/>
</dbReference>
<dbReference type="InterPro" id="IPR018098">
    <property type="entry name" value="Ribosomal_eS24_CS"/>
</dbReference>
<dbReference type="InterPro" id="IPR012678">
    <property type="entry name" value="Ribosomal_uL23/eL15/eS24_sf"/>
</dbReference>
<dbReference type="PANTHER" id="PTHR10496">
    <property type="entry name" value="40S RIBOSOMAL PROTEIN S24"/>
    <property type="match status" value="1"/>
</dbReference>
<dbReference type="Pfam" id="PF01282">
    <property type="entry name" value="Ribosomal_S24e"/>
    <property type="match status" value="1"/>
</dbReference>
<dbReference type="SUPFAM" id="SSF54189">
    <property type="entry name" value="Ribosomal proteins S24e, L23 and L15e"/>
    <property type="match status" value="1"/>
</dbReference>
<dbReference type="PROSITE" id="PS00529">
    <property type="entry name" value="RIBOSOMAL_S24E"/>
    <property type="match status" value="1"/>
</dbReference>